<keyword id="KW-0046">Antibiotic resistance</keyword>
<keyword id="KW-0378">Hydrolase</keyword>
<keyword id="KW-0441">Lipid A biosynthesis</keyword>
<keyword id="KW-0444">Lipid biosynthesis</keyword>
<keyword id="KW-0443">Lipid metabolism</keyword>
<keyword id="KW-0448">Lipopolysaccharide biosynthesis</keyword>
<feature type="chain" id="PRO_0000383522" description="Probable 4-deoxy-4-formamido-L-arabinose-phosphoundecaprenol deformylase ArnD">
    <location>
        <begin position="1"/>
        <end position="295"/>
    </location>
</feature>
<feature type="domain" description="NodB homology" evidence="1">
    <location>
        <begin position="2"/>
        <end position="260"/>
    </location>
</feature>
<reference key="1">
    <citation type="journal article" date="2006" name="Genome Biol.">
        <title>Genomic analysis reveals that Pseudomonas aeruginosa virulence is combinatorial.</title>
        <authorList>
            <person name="Lee D.G."/>
            <person name="Urbach J.M."/>
            <person name="Wu G."/>
            <person name="Liberati N.T."/>
            <person name="Feinbaum R.L."/>
            <person name="Miyata S."/>
            <person name="Diggins L.T."/>
            <person name="He J."/>
            <person name="Saucier M."/>
            <person name="Deziel E."/>
            <person name="Friedman L."/>
            <person name="Li L."/>
            <person name="Grills G."/>
            <person name="Montgomery K."/>
            <person name="Kucherlapati R."/>
            <person name="Rahme L.G."/>
            <person name="Ausubel F.M."/>
        </authorList>
    </citation>
    <scope>NUCLEOTIDE SEQUENCE [LARGE SCALE GENOMIC DNA]</scope>
    <source>
        <strain>UCBPP-PA14</strain>
    </source>
</reference>
<name>ARND_PSEAB</name>
<sequence length="295" mass="32906">MIQAGLRIDVDTFRGTRDGVPRLLDLLDEAGLKATFFFSVGPDNMGRHLWRLARPAFFWKMLRSRAASLYGWDILLAGTAWPGKPIGRELGPLMRRTQAAGHEVGLHAWDHHAWQTHVGVWSAQQLGEQIRRGSDCLADILGQPVRCSAAAGWRADGRVVEAKQPFGFRYNSDCRGRGAFRPRLADGSPGIPQVPVNLPTFDEVVGPGLPREAYNDFILERFAAGRDNVYTIHAEVEGLLLAPAFRELLRRAERRGIRFRPLGELLPDDPRSLPLAELVRGRLAGREGWLGVRQP</sequence>
<gene>
    <name evidence="1" type="primary">arnD</name>
    <name type="ordered locus">PA14_18340</name>
</gene>
<proteinExistence type="inferred from homology"/>
<evidence type="ECO:0000255" key="1">
    <source>
        <dbReference type="HAMAP-Rule" id="MF_01870"/>
    </source>
</evidence>
<organism>
    <name type="scientific">Pseudomonas aeruginosa (strain UCBPP-PA14)</name>
    <dbReference type="NCBI Taxonomy" id="208963"/>
    <lineage>
        <taxon>Bacteria</taxon>
        <taxon>Pseudomonadati</taxon>
        <taxon>Pseudomonadota</taxon>
        <taxon>Gammaproteobacteria</taxon>
        <taxon>Pseudomonadales</taxon>
        <taxon>Pseudomonadaceae</taxon>
        <taxon>Pseudomonas</taxon>
    </lineage>
</organism>
<dbReference type="EC" id="3.5.1.n3" evidence="1"/>
<dbReference type="EMBL" id="CP000438">
    <property type="protein sequence ID" value="ABJ12789.1"/>
    <property type="molecule type" value="Genomic_DNA"/>
</dbReference>
<dbReference type="RefSeq" id="WP_003138080.1">
    <property type="nucleotide sequence ID" value="NZ_CP034244.1"/>
</dbReference>
<dbReference type="SMR" id="Q02R26"/>
<dbReference type="KEGG" id="pau:PA14_18340"/>
<dbReference type="PseudoCAP" id="PA14_18340"/>
<dbReference type="HOGENOM" id="CLU_084199_0_0_6"/>
<dbReference type="BioCyc" id="PAER208963:G1G74-1513-MONOMER"/>
<dbReference type="UniPathway" id="UPA00030"/>
<dbReference type="UniPathway" id="UPA00036">
    <property type="reaction ID" value="UER00496"/>
</dbReference>
<dbReference type="Proteomes" id="UP000000653">
    <property type="component" value="Chromosome"/>
</dbReference>
<dbReference type="GO" id="GO:0016020">
    <property type="term" value="C:membrane"/>
    <property type="evidence" value="ECO:0007669"/>
    <property type="project" value="GOC"/>
</dbReference>
<dbReference type="GO" id="GO:0016811">
    <property type="term" value="F:hydrolase activity, acting on carbon-nitrogen (but not peptide) bonds, in linear amides"/>
    <property type="evidence" value="ECO:0007669"/>
    <property type="project" value="UniProtKB-UniRule"/>
</dbReference>
<dbReference type="GO" id="GO:0036108">
    <property type="term" value="P:4-amino-4-deoxy-alpha-L-arabinopyranosyl undecaprenyl phosphate biosynthetic process"/>
    <property type="evidence" value="ECO:0007669"/>
    <property type="project" value="UniProtKB-UniRule"/>
</dbReference>
<dbReference type="GO" id="GO:0009245">
    <property type="term" value="P:lipid A biosynthetic process"/>
    <property type="evidence" value="ECO:0007669"/>
    <property type="project" value="UniProtKB-UniRule"/>
</dbReference>
<dbReference type="GO" id="GO:0009103">
    <property type="term" value="P:lipopolysaccharide biosynthetic process"/>
    <property type="evidence" value="ECO:0007669"/>
    <property type="project" value="UniProtKB-UniRule"/>
</dbReference>
<dbReference type="GO" id="GO:0046677">
    <property type="term" value="P:response to antibiotic"/>
    <property type="evidence" value="ECO:0007669"/>
    <property type="project" value="UniProtKB-KW"/>
</dbReference>
<dbReference type="Gene3D" id="3.20.20.370">
    <property type="entry name" value="Glycoside hydrolase/deacetylase"/>
    <property type="match status" value="1"/>
</dbReference>
<dbReference type="HAMAP" id="MF_01870">
    <property type="entry name" value="ArnD"/>
    <property type="match status" value="1"/>
</dbReference>
<dbReference type="InterPro" id="IPR023557">
    <property type="entry name" value="ArnD"/>
</dbReference>
<dbReference type="InterPro" id="IPR011330">
    <property type="entry name" value="Glyco_hydro/deAcase_b/a-brl"/>
</dbReference>
<dbReference type="InterPro" id="IPR002509">
    <property type="entry name" value="NODB_dom"/>
</dbReference>
<dbReference type="InterPro" id="IPR050248">
    <property type="entry name" value="Polysacc_deacetylase_ArnD"/>
</dbReference>
<dbReference type="NCBIfam" id="NF011923">
    <property type="entry name" value="PRK15394.1"/>
    <property type="match status" value="1"/>
</dbReference>
<dbReference type="PANTHER" id="PTHR10587:SF137">
    <property type="entry name" value="4-DEOXY-4-FORMAMIDO-L-ARABINOSE-PHOSPHOUNDECAPRENOL DEFORMYLASE ARND-RELATED"/>
    <property type="match status" value="1"/>
</dbReference>
<dbReference type="PANTHER" id="PTHR10587">
    <property type="entry name" value="GLYCOSYL TRANSFERASE-RELATED"/>
    <property type="match status" value="1"/>
</dbReference>
<dbReference type="Pfam" id="PF01522">
    <property type="entry name" value="Polysacc_deac_1"/>
    <property type="match status" value="1"/>
</dbReference>
<dbReference type="SUPFAM" id="SSF88713">
    <property type="entry name" value="Glycoside hydrolase/deacetylase"/>
    <property type="match status" value="1"/>
</dbReference>
<dbReference type="PROSITE" id="PS51677">
    <property type="entry name" value="NODB"/>
    <property type="match status" value="1"/>
</dbReference>
<accession>Q02R26</accession>
<comment type="function">
    <text evidence="1">Catalyzes the deformylation of 4-deoxy-4-formamido-L-arabinose-phosphoundecaprenol to 4-amino-4-deoxy-L-arabinose-phosphoundecaprenol. The modified arabinose is attached to lipid A and is required for resistance to polymyxin and cationic antimicrobial peptides.</text>
</comment>
<comment type="catalytic activity">
    <reaction evidence="1">
        <text>4-deoxy-4-formamido-alpha-L-arabinopyranosyl di-trans,octa-cis-undecaprenyl phosphate + H2O = 4-amino-4-deoxy-alpha-L-arabinopyranosyl di-trans,octa-cis-undecaprenyl phosphate + formate</text>
        <dbReference type="Rhea" id="RHEA:27734"/>
        <dbReference type="ChEBI" id="CHEBI:15377"/>
        <dbReference type="ChEBI" id="CHEBI:15740"/>
        <dbReference type="ChEBI" id="CHEBI:58909"/>
        <dbReference type="ChEBI" id="CHEBI:60463"/>
        <dbReference type="EC" id="3.5.1.n3"/>
    </reaction>
</comment>
<comment type="pathway">
    <text evidence="1">Glycolipid biosynthesis; 4-amino-4-deoxy-alpha-L-arabinose undecaprenyl phosphate biosynthesis; 4-amino-4-deoxy-alpha-L-arabinose undecaprenyl phosphate from UDP-4-deoxy-4-formamido-beta-L-arabinose and undecaprenyl phosphate: step 2/2.</text>
</comment>
<comment type="pathway">
    <text evidence="1">Bacterial outer membrane biogenesis; lipopolysaccharide biosynthesis.</text>
</comment>
<comment type="similarity">
    <text evidence="1">Belongs to the polysaccharide deacetylase family. ArnD deformylase subfamily.</text>
</comment>
<protein>
    <recommendedName>
        <fullName evidence="1">Probable 4-deoxy-4-formamido-L-arabinose-phosphoundecaprenol deformylase ArnD</fullName>
        <ecNumber evidence="1">3.5.1.n3</ecNumber>
    </recommendedName>
</protein>